<geneLocation type="chloroplast"/>
<evidence type="ECO:0000255" key="1">
    <source>
        <dbReference type="HAMAP-Rule" id="MF_00441"/>
    </source>
</evidence>
<evidence type="ECO:0000269" key="2">
    <source>
    </source>
</evidence>
<evidence type="ECO:0000269" key="3">
    <source>
    </source>
</evidence>
<evidence type="ECO:0000269" key="4">
    <source ref="1"/>
</evidence>
<evidence type="ECO:0000269" key="5">
    <source ref="3"/>
</evidence>
<evidence type="ECO:0000305" key="6"/>
<evidence type="ECO:0007829" key="7">
    <source>
        <dbReference type="PDB" id="3JCU"/>
    </source>
</evidence>
<sequence>MLNIFSLICLNSALYSSSFFFGKLPEAYAFLSPIVDFMPVIPLFFFLLAFVWQAAVSFR</sequence>
<comment type="function">
    <text evidence="3">One of the components of the core complex of photosystem II (PSII). PSII is a light-driven water:plastoquinone oxidoreductase that uses light energy to abstract electrons from H(2)O, generating O(2) and a proton gradient subsequently used for ATP formation. It consists of a core antenna complex that captures photons, and an electron transfer chain that converts photonic excitation into a charge separation. May be involved in PSII dimerization (PubMed:9632665).</text>
</comment>
<comment type="function">
    <text evidence="1">One of the components of the core complex of photosystem II (PSII). PSII is a light-driven water:plastoquinone oxidoreductase that uses light energy to abstract electrons from H(2)O, generating O(2) and a proton gradient subsequently used for ATP formation. It consists of a core antenna complex that captures photons, and an electron transfer chain that converts photonic excitation into a charge separation.</text>
</comment>
<comment type="subunit">
    <text evidence="1 2 3 4 5">PSII is composed of 1 copy each of membrane proteins PsbA, PsbB, PsbC, PsbD, PsbE, PsbF, PsbH, PsbI, PsbJ, PsbK, PsbL, PsbM, PsbT, PsbX, PsbY, PsbZ, Psb30/Ycf12, at least 3 peripheral proteins of the oxygen-evolving complex and a large number of cofactors. It forms dimeric complexes. This protein, PsbL and plastoquinone-9 are found in PSII dimers but not seen in PSII monomers (PubMed:9632665).</text>
</comment>
<comment type="subcellular location">
    <subcellularLocation>
        <location evidence="1 2 3 4 5">Plastid</location>
        <location evidence="1 2 3 4 5">Chloroplast thylakoid membrane</location>
        <topology evidence="1">Single-pass membrane protein</topology>
    </subcellularLocation>
</comment>
<comment type="mass spectrometry"/>
<comment type="similarity">
    <text evidence="1">Belongs to the PsbK family.</text>
</comment>
<comment type="sequence caution" evidence="6">
    <conflict type="erroneous initiation">
        <sequence resource="EMBL-CDS" id="CAA31277"/>
    </conflict>
    <text>Extended N-terminus.</text>
</comment>
<keyword id="KW-0002">3D-structure</keyword>
<keyword id="KW-0150">Chloroplast</keyword>
<keyword id="KW-0903">Direct protein sequencing</keyword>
<keyword id="KW-0472">Membrane</keyword>
<keyword id="KW-0602">Photosynthesis</keyword>
<keyword id="KW-0604">Photosystem II</keyword>
<keyword id="KW-0934">Plastid</keyword>
<keyword id="KW-0674">Reaction center</keyword>
<keyword id="KW-1185">Reference proteome</keyword>
<keyword id="KW-0793">Thylakoid</keyword>
<keyword id="KW-0812">Transmembrane</keyword>
<keyword id="KW-1133">Transmembrane helix</keyword>
<dbReference type="EMBL" id="X12786">
    <property type="protein sequence ID" value="CAA31277.2"/>
    <property type="status" value="ALT_INIT"/>
    <property type="molecule type" value="Genomic_DNA"/>
</dbReference>
<dbReference type="EMBL" id="AJ400848">
    <property type="protein sequence ID" value="CAB88708.1"/>
    <property type="molecule type" value="Genomic_DNA"/>
</dbReference>
<dbReference type="PIR" id="S01122">
    <property type="entry name" value="S01122"/>
</dbReference>
<dbReference type="RefSeq" id="NP_054915.1">
    <property type="nucleotide sequence ID" value="NC_002202.1"/>
</dbReference>
<dbReference type="PDB" id="3JCU">
    <property type="method" value="EM"/>
    <property type="resolution" value="3.20 A"/>
    <property type="chains" value="K/k=1-59"/>
</dbReference>
<dbReference type="PDB" id="8Z9D">
    <property type="method" value="EM"/>
    <property type="resolution" value="3.22 A"/>
    <property type="chains" value="K/KK/Kk/k=1-59"/>
</dbReference>
<dbReference type="PDBsum" id="3JCU"/>
<dbReference type="PDBsum" id="8Z9D"/>
<dbReference type="EMDB" id="EMD-39860"/>
<dbReference type="SMR" id="P12163"/>
<dbReference type="DIP" id="DIP-62017N"/>
<dbReference type="FunCoup" id="P12163">
    <property type="interactions" value="52"/>
</dbReference>
<dbReference type="IntAct" id="P12163">
    <property type="interactions" value="1"/>
</dbReference>
<dbReference type="STRING" id="3562.P12163"/>
<dbReference type="GeneID" id="2715616"/>
<dbReference type="KEGG" id="soe:2715616"/>
<dbReference type="InParanoid" id="P12163"/>
<dbReference type="OrthoDB" id="1673137at2759"/>
<dbReference type="Proteomes" id="UP001155700">
    <property type="component" value="Chloroplast Pltd"/>
</dbReference>
<dbReference type="GO" id="GO:0009535">
    <property type="term" value="C:chloroplast thylakoid membrane"/>
    <property type="evidence" value="ECO:0007669"/>
    <property type="project" value="UniProtKB-SubCell"/>
</dbReference>
<dbReference type="GO" id="GO:0009539">
    <property type="term" value="C:photosystem II reaction center"/>
    <property type="evidence" value="ECO:0007669"/>
    <property type="project" value="InterPro"/>
</dbReference>
<dbReference type="GO" id="GO:0015979">
    <property type="term" value="P:photosynthesis"/>
    <property type="evidence" value="ECO:0007669"/>
    <property type="project" value="UniProtKB-UniRule"/>
</dbReference>
<dbReference type="HAMAP" id="MF_00441">
    <property type="entry name" value="PSII_PsbK"/>
    <property type="match status" value="1"/>
</dbReference>
<dbReference type="InterPro" id="IPR003687">
    <property type="entry name" value="PSII_PsbK"/>
</dbReference>
<dbReference type="InterPro" id="IPR037270">
    <property type="entry name" value="PSII_PsbK_sf"/>
</dbReference>
<dbReference type="NCBIfam" id="NF002715">
    <property type="entry name" value="PRK02553.1"/>
    <property type="match status" value="1"/>
</dbReference>
<dbReference type="PANTHER" id="PTHR35325">
    <property type="match status" value="1"/>
</dbReference>
<dbReference type="PANTHER" id="PTHR35325:SF1">
    <property type="entry name" value="PHOTOSYSTEM II REACTION CENTER PROTEIN K"/>
    <property type="match status" value="1"/>
</dbReference>
<dbReference type="Pfam" id="PF02533">
    <property type="entry name" value="PsbK"/>
    <property type="match status" value="1"/>
</dbReference>
<dbReference type="SUPFAM" id="SSF161037">
    <property type="entry name" value="Photosystem II reaction center protein K, PsbK"/>
    <property type="match status" value="1"/>
</dbReference>
<gene>
    <name evidence="1" type="primary">psbK</name>
</gene>
<organism>
    <name type="scientific">Spinacia oleracea</name>
    <name type="common">Spinach</name>
    <dbReference type="NCBI Taxonomy" id="3562"/>
    <lineage>
        <taxon>Eukaryota</taxon>
        <taxon>Viridiplantae</taxon>
        <taxon>Streptophyta</taxon>
        <taxon>Embryophyta</taxon>
        <taxon>Tracheophyta</taxon>
        <taxon>Spermatophyta</taxon>
        <taxon>Magnoliopsida</taxon>
        <taxon>eudicotyledons</taxon>
        <taxon>Gunneridae</taxon>
        <taxon>Pentapetalae</taxon>
        <taxon>Caryophyllales</taxon>
        <taxon>Chenopodiaceae</taxon>
        <taxon>Chenopodioideae</taxon>
        <taxon>Anserineae</taxon>
        <taxon>Spinacia</taxon>
    </lineage>
</organism>
<reference key="1">
    <citation type="journal article" date="1988" name="FEBS Lett.">
        <title>Identification of a new gene in the chloroplast genome encoding a low-molecular-mass polypeptide of photosystem II complex.</title>
        <authorList>
            <person name="Murata N."/>
            <person name="Miyao M."/>
            <person name="Hayashida N."/>
            <person name="Hidaka T."/>
            <person name="Sugiura M."/>
        </authorList>
    </citation>
    <scope>NUCLEOTIDE SEQUENCE [GENOMIC DNA]</scope>
    <scope>PROTEIN SEQUENCE OF 23-35</scope>
    <scope>SUBUNIT</scope>
    <scope>SUBCELLULAR LOCATION</scope>
</reference>
<reference key="2">
    <citation type="journal article" date="2001" name="Plant Mol. Biol.">
        <title>The plastid chromosome of spinach (Spinacia oleracea): complete nucleotide sequence and gene organization.</title>
        <authorList>
            <person name="Schmitz-Linneweber C."/>
            <person name="Maier R.M."/>
            <person name="Alcaraz J.-P."/>
            <person name="Cottet A."/>
            <person name="Herrmann R.G."/>
            <person name="Mache R."/>
        </authorList>
    </citation>
    <scope>NUCLEOTIDE SEQUENCE [LARGE SCALE GENOMIC DNA]</scope>
    <source>
        <strain>cv. Geant d'hiver</strain>
        <strain>cv. Monatol</strain>
    </source>
</reference>
<reference key="3">
    <citation type="journal article" date="1988" name="FEBS Lett.">
        <title>Characterization of low molecular mass proteins of photosystem II by N-terminal sequencing.</title>
        <authorList>
            <person name="Schroeder W.P."/>
            <person name="Henrysson T."/>
            <person name="Aakerlund H.-E."/>
        </authorList>
    </citation>
    <scope>PROTEIN SEQUENCE OF 23-34</scope>
    <scope>SUBUNIT</scope>
    <scope>SUBCELLULAR LOCATION</scope>
</reference>
<reference key="4">
    <citation type="journal article" date="1989" name="FEBS Lett.">
        <title>N-terminal sequencing of photosystem II low-molecular-mass proteins. 5 and 4.1 kDa components of the O2-evolving core complex from higher plants.</title>
        <authorList>
            <person name="Ikeuchi M."/>
            <person name="Takio K."/>
            <person name="Inoue Y."/>
        </authorList>
    </citation>
    <scope>PROTEIN SEQUENCE OF 23-36</scope>
    <scope>SUBUNIT</scope>
    <scope>SUBCELLULAR LOCATION</scope>
</reference>
<reference key="5">
    <citation type="journal article" date="1998" name="J. Biol. Chem.">
        <title>Isolation and characterization of monomeric and dimeric CP47-reaction center photosystem II complexes.</title>
        <authorList>
            <person name="Zheleva D."/>
            <person name="Sharma J."/>
            <person name="Panico M."/>
            <person name="Morris H.R."/>
            <person name="Barber J."/>
        </authorList>
    </citation>
    <scope>PROTEIN SEQUENCE OF 23-30</scope>
    <scope>FUNCTION</scope>
    <scope>SUBUNIT</scope>
    <scope>SUBCELLULAR LOCATION</scope>
    <scope>MASS SPECTROMETRY</scope>
</reference>
<name>PSBK_SPIOL</name>
<feature type="propeptide" id="PRO_0000029529" evidence="1 2 3 4 5">
    <location>
        <begin position="1"/>
        <end position="22"/>
    </location>
</feature>
<feature type="chain" id="PRO_0000029530" description="Photosystem II reaction center protein K" evidence="1">
    <location>
        <begin position="23"/>
        <end position="59"/>
    </location>
</feature>
<feature type="transmembrane region" description="Helical" evidence="1">
    <location>
        <begin position="30"/>
        <end position="50"/>
    </location>
</feature>
<feature type="sequence conflict" description="In Ref. 1; CAA31277." evidence="6" ref="1">
    <original>I</original>
    <variation>T</variation>
    <location>
        <position position="4"/>
    </location>
</feature>
<feature type="sequence conflict" description="In Ref. 1; AA sequence." evidence="6" ref="1">
    <original>I</original>
    <variation>IGI</variation>
    <location>
        <position position="8"/>
    </location>
</feature>
<feature type="sequence conflict" description="In Ref. 1; CAA31277." evidence="6" ref="1">
    <original>ALY</original>
    <variation>TLF</variation>
    <location>
        <begin position="13"/>
        <end position="15"/>
    </location>
</feature>
<feature type="sequence conflict" description="In Ref. 1; CAA31277." evidence="6" ref="1">
    <original>S</original>
    <variation>N</variation>
    <location>
        <position position="32"/>
    </location>
</feature>
<feature type="sequence conflict" description="In Ref. 1; CAA31277." evidence="6" ref="1">
    <original>F</original>
    <variation>I</variation>
    <location>
        <position position="37"/>
    </location>
</feature>
<feature type="helix" evidence="7">
    <location>
        <begin position="26"/>
        <end position="31"/>
    </location>
</feature>
<feature type="helix" evidence="7">
    <location>
        <begin position="32"/>
        <end position="37"/>
    </location>
</feature>
<feature type="turn" evidence="7">
    <location>
        <begin position="38"/>
        <end position="40"/>
    </location>
</feature>
<feature type="helix" evidence="7">
    <location>
        <begin position="41"/>
        <end position="55"/>
    </location>
</feature>
<protein>
    <recommendedName>
        <fullName evidence="1">Photosystem II reaction center protein K</fullName>
        <shortName evidence="1">PSII-K</shortName>
    </recommendedName>
</protein>
<proteinExistence type="evidence at protein level"/>
<accession>P12163</accession>
<accession>Q9M3M8</accession>